<evidence type="ECO:0000255" key="1">
    <source>
        <dbReference type="HAMAP-Rule" id="MF_01270"/>
    </source>
</evidence>
<gene>
    <name evidence="1" type="primary">anmK</name>
    <name type="ordered locus">SCO7595</name>
    <name type="ORF">SC7H9.07c</name>
</gene>
<dbReference type="EC" id="2.7.1.170" evidence="1"/>
<dbReference type="EMBL" id="AL939132">
    <property type="protein sequence ID" value="CAC16516.1"/>
    <property type="molecule type" value="Genomic_DNA"/>
</dbReference>
<dbReference type="RefSeq" id="NP_631637.1">
    <property type="nucleotide sequence ID" value="NC_003888.3"/>
</dbReference>
<dbReference type="RefSeq" id="WP_011031767.1">
    <property type="nucleotide sequence ID" value="NZ_VNID01000005.1"/>
</dbReference>
<dbReference type="SMR" id="Q9EWI9"/>
<dbReference type="STRING" id="100226.gene:17765255"/>
<dbReference type="PaxDb" id="100226-SCO7595"/>
<dbReference type="KEGG" id="sco:SCO7595"/>
<dbReference type="PATRIC" id="fig|100226.15.peg.7711"/>
<dbReference type="eggNOG" id="COG2377">
    <property type="taxonomic scope" value="Bacteria"/>
</dbReference>
<dbReference type="HOGENOM" id="CLU_038782_0_0_11"/>
<dbReference type="InParanoid" id="Q9EWI9"/>
<dbReference type="OrthoDB" id="9763949at2"/>
<dbReference type="PhylomeDB" id="Q9EWI9"/>
<dbReference type="UniPathway" id="UPA00343"/>
<dbReference type="UniPathway" id="UPA00544"/>
<dbReference type="Proteomes" id="UP000001973">
    <property type="component" value="Chromosome"/>
</dbReference>
<dbReference type="GO" id="GO:0005524">
    <property type="term" value="F:ATP binding"/>
    <property type="evidence" value="ECO:0007669"/>
    <property type="project" value="UniProtKB-UniRule"/>
</dbReference>
<dbReference type="GO" id="GO:0016301">
    <property type="term" value="F:kinase activity"/>
    <property type="evidence" value="ECO:0000318"/>
    <property type="project" value="GO_Central"/>
</dbReference>
<dbReference type="GO" id="GO:0016773">
    <property type="term" value="F:phosphotransferase activity, alcohol group as acceptor"/>
    <property type="evidence" value="ECO:0007669"/>
    <property type="project" value="UniProtKB-UniRule"/>
</dbReference>
<dbReference type="GO" id="GO:0097175">
    <property type="term" value="P:1,6-anhydro-N-acetyl-beta-muramic acid catabolic process"/>
    <property type="evidence" value="ECO:0007669"/>
    <property type="project" value="UniProtKB-UniRule"/>
</dbReference>
<dbReference type="GO" id="GO:0006040">
    <property type="term" value="P:amino sugar metabolic process"/>
    <property type="evidence" value="ECO:0007669"/>
    <property type="project" value="InterPro"/>
</dbReference>
<dbReference type="GO" id="GO:0009254">
    <property type="term" value="P:peptidoglycan turnover"/>
    <property type="evidence" value="ECO:0007669"/>
    <property type="project" value="UniProtKB-UniRule"/>
</dbReference>
<dbReference type="CDD" id="cd24050">
    <property type="entry name" value="ASKHA_NBD_ANMK"/>
    <property type="match status" value="1"/>
</dbReference>
<dbReference type="Gene3D" id="3.30.420.40">
    <property type="match status" value="2"/>
</dbReference>
<dbReference type="HAMAP" id="MF_01270">
    <property type="entry name" value="AnhMurNAc_kinase"/>
    <property type="match status" value="1"/>
</dbReference>
<dbReference type="InterPro" id="IPR005338">
    <property type="entry name" value="Anhydro_N_Ac-Mur_kinase"/>
</dbReference>
<dbReference type="InterPro" id="IPR043129">
    <property type="entry name" value="ATPase_NBD"/>
</dbReference>
<dbReference type="NCBIfam" id="NF007146">
    <property type="entry name" value="PRK09585.2-6"/>
    <property type="match status" value="1"/>
</dbReference>
<dbReference type="PANTHER" id="PTHR30605">
    <property type="entry name" value="ANHYDRO-N-ACETYLMURAMIC ACID KINASE"/>
    <property type="match status" value="1"/>
</dbReference>
<dbReference type="PANTHER" id="PTHR30605:SF0">
    <property type="entry name" value="ANHYDRO-N-ACETYLMURAMIC ACID KINASE"/>
    <property type="match status" value="1"/>
</dbReference>
<dbReference type="Pfam" id="PF03702">
    <property type="entry name" value="AnmK"/>
    <property type="match status" value="1"/>
</dbReference>
<dbReference type="SUPFAM" id="SSF53067">
    <property type="entry name" value="Actin-like ATPase domain"/>
    <property type="match status" value="1"/>
</dbReference>
<sequence length="391" mass="39498">MRVIGLMSGTSYDAVEAAAADLELEGEALVMRPLGHLSAPYPDGLRDLIADSLPPAAATVRTVARLDTGIGQAFADVAVRAVRELCGGAAGLVVSHGQTLYHWVEDGAVRGTLQLGQPAWIAEATGLPVVSDLRGRDVAAGGQGAPLVAMTDVLAMAALPGVPAALNLGGIANVTVVAPGAEPLAFDTGPANALMDAAVRHFTGGAAAFDEDGRRAGAGRVDPGLLRVLLDDPYYGRPAPKSTGKEQFHLPYLLAALAAAPVAEPDDVLATLARLTAVTVADACRAHGVTRLVVSGGGARNPVLMGMIAEELPGVDLGSSDALGLPSDAKEALAFALLGFLTVNGLPGAIPSGTGARRASLLGSITPGREPLRLPEPAGEPPRVLRVVGGP</sequence>
<organism>
    <name type="scientific">Streptomyces coelicolor (strain ATCC BAA-471 / A3(2) / M145)</name>
    <dbReference type="NCBI Taxonomy" id="100226"/>
    <lineage>
        <taxon>Bacteria</taxon>
        <taxon>Bacillati</taxon>
        <taxon>Actinomycetota</taxon>
        <taxon>Actinomycetes</taxon>
        <taxon>Kitasatosporales</taxon>
        <taxon>Streptomycetaceae</taxon>
        <taxon>Streptomyces</taxon>
        <taxon>Streptomyces albidoflavus group</taxon>
    </lineage>
</organism>
<comment type="function">
    <text evidence="1">Catalyzes the specific phosphorylation of 1,6-anhydro-N-acetylmuramic acid (anhMurNAc) with the simultaneous cleavage of the 1,6-anhydro ring, generating MurNAc-6-P. Is required for the utilization of anhMurNAc either imported from the medium or derived from its own cell wall murein, and thus plays a role in cell wall recycling.</text>
</comment>
<comment type="catalytic activity">
    <reaction evidence="1">
        <text>1,6-anhydro-N-acetyl-beta-muramate + ATP + H2O = N-acetyl-D-muramate 6-phosphate + ADP + H(+)</text>
        <dbReference type="Rhea" id="RHEA:24952"/>
        <dbReference type="ChEBI" id="CHEBI:15377"/>
        <dbReference type="ChEBI" id="CHEBI:15378"/>
        <dbReference type="ChEBI" id="CHEBI:30616"/>
        <dbReference type="ChEBI" id="CHEBI:58690"/>
        <dbReference type="ChEBI" id="CHEBI:58722"/>
        <dbReference type="ChEBI" id="CHEBI:456216"/>
        <dbReference type="EC" id="2.7.1.170"/>
    </reaction>
</comment>
<comment type="pathway">
    <text evidence="1">Amino-sugar metabolism; 1,6-anhydro-N-acetylmuramate degradation.</text>
</comment>
<comment type="pathway">
    <text evidence="1">Cell wall biogenesis; peptidoglycan recycling.</text>
</comment>
<comment type="similarity">
    <text evidence="1">Belongs to the anhydro-N-acetylmuramic acid kinase family.</text>
</comment>
<proteinExistence type="inferred from homology"/>
<name>ANMK_STRCO</name>
<feature type="chain" id="PRO_0000250066" description="Anhydro-N-acetylmuramic acid kinase">
    <location>
        <begin position="1"/>
        <end position="391"/>
    </location>
</feature>
<feature type="binding site" evidence="1">
    <location>
        <begin position="9"/>
        <end position="16"/>
    </location>
    <ligand>
        <name>ATP</name>
        <dbReference type="ChEBI" id="CHEBI:30616"/>
    </ligand>
</feature>
<accession>Q9EWI9</accession>
<reference key="1">
    <citation type="journal article" date="2002" name="Nature">
        <title>Complete genome sequence of the model actinomycete Streptomyces coelicolor A3(2).</title>
        <authorList>
            <person name="Bentley S.D."/>
            <person name="Chater K.F."/>
            <person name="Cerdeno-Tarraga A.-M."/>
            <person name="Challis G.L."/>
            <person name="Thomson N.R."/>
            <person name="James K.D."/>
            <person name="Harris D.E."/>
            <person name="Quail M.A."/>
            <person name="Kieser H."/>
            <person name="Harper D."/>
            <person name="Bateman A."/>
            <person name="Brown S."/>
            <person name="Chandra G."/>
            <person name="Chen C.W."/>
            <person name="Collins M."/>
            <person name="Cronin A."/>
            <person name="Fraser A."/>
            <person name="Goble A."/>
            <person name="Hidalgo J."/>
            <person name="Hornsby T."/>
            <person name="Howarth S."/>
            <person name="Huang C.-H."/>
            <person name="Kieser T."/>
            <person name="Larke L."/>
            <person name="Murphy L.D."/>
            <person name="Oliver K."/>
            <person name="O'Neil S."/>
            <person name="Rabbinowitsch E."/>
            <person name="Rajandream M.A."/>
            <person name="Rutherford K.M."/>
            <person name="Rutter S."/>
            <person name="Seeger K."/>
            <person name="Saunders D."/>
            <person name="Sharp S."/>
            <person name="Squares R."/>
            <person name="Squares S."/>
            <person name="Taylor K."/>
            <person name="Warren T."/>
            <person name="Wietzorrek A."/>
            <person name="Woodward J.R."/>
            <person name="Barrell B.G."/>
            <person name="Parkhill J."/>
            <person name="Hopwood D.A."/>
        </authorList>
    </citation>
    <scope>NUCLEOTIDE SEQUENCE [LARGE SCALE GENOMIC DNA]</scope>
    <source>
        <strain>ATCC BAA-471 / A3(2) / M145</strain>
    </source>
</reference>
<keyword id="KW-0067">ATP-binding</keyword>
<keyword id="KW-0119">Carbohydrate metabolism</keyword>
<keyword id="KW-0418">Kinase</keyword>
<keyword id="KW-0547">Nucleotide-binding</keyword>
<keyword id="KW-1185">Reference proteome</keyword>
<keyword id="KW-0808">Transferase</keyword>
<protein>
    <recommendedName>
        <fullName evidence="1">Anhydro-N-acetylmuramic acid kinase</fullName>
        <ecNumber evidence="1">2.7.1.170</ecNumber>
    </recommendedName>
    <alternativeName>
        <fullName evidence="1">AnhMurNAc kinase</fullName>
    </alternativeName>
</protein>